<organism>
    <name type="scientific">Thermoanaerobacter pseudethanolicus (strain ATCC 33223 / 39E)</name>
    <name type="common">Clostridium thermohydrosulfuricum</name>
    <dbReference type="NCBI Taxonomy" id="340099"/>
    <lineage>
        <taxon>Bacteria</taxon>
        <taxon>Bacillati</taxon>
        <taxon>Bacillota</taxon>
        <taxon>Clostridia</taxon>
        <taxon>Thermoanaerobacterales</taxon>
        <taxon>Thermoanaerobacteraceae</taxon>
        <taxon>Thermoanaerobacter</taxon>
    </lineage>
</organism>
<reference key="1">
    <citation type="submission" date="2008-01" db="EMBL/GenBank/DDBJ databases">
        <title>Complete sequence of Thermoanaerobacter pseudethanolicus 39E.</title>
        <authorList>
            <person name="Copeland A."/>
            <person name="Lucas S."/>
            <person name="Lapidus A."/>
            <person name="Barry K."/>
            <person name="Glavina del Rio T."/>
            <person name="Dalin E."/>
            <person name="Tice H."/>
            <person name="Pitluck S."/>
            <person name="Bruce D."/>
            <person name="Goodwin L."/>
            <person name="Saunders E."/>
            <person name="Brettin T."/>
            <person name="Detter J.C."/>
            <person name="Han C."/>
            <person name="Schmutz J."/>
            <person name="Larimer F."/>
            <person name="Land M."/>
            <person name="Hauser L."/>
            <person name="Kyrpides N."/>
            <person name="Lykidis A."/>
            <person name="Hemme C."/>
            <person name="Fields M.W."/>
            <person name="He Z."/>
            <person name="Zhou J."/>
            <person name="Richardson P."/>
        </authorList>
    </citation>
    <scope>NUCLEOTIDE SEQUENCE [LARGE SCALE GENOMIC DNA]</scope>
    <source>
        <strain>ATCC 33223 / DSM 2355 / 39E</strain>
    </source>
</reference>
<dbReference type="EC" id="3.1.-.-" evidence="1"/>
<dbReference type="EC" id="5.6.2.4" evidence="1"/>
<dbReference type="EMBL" id="CP000924">
    <property type="protein sequence ID" value="ABY95636.1"/>
    <property type="molecule type" value="Genomic_DNA"/>
</dbReference>
<dbReference type="RefSeq" id="WP_012269714.1">
    <property type="nucleotide sequence ID" value="NC_010321.1"/>
</dbReference>
<dbReference type="SMR" id="B0KDB7"/>
<dbReference type="STRING" id="340099.Teth39_2010"/>
<dbReference type="KEGG" id="tpd:Teth39_2010"/>
<dbReference type="eggNOG" id="COG1074">
    <property type="taxonomic scope" value="Bacteria"/>
</dbReference>
<dbReference type="HOGENOM" id="CLU_001114_3_1_9"/>
<dbReference type="Proteomes" id="UP000002156">
    <property type="component" value="Chromosome"/>
</dbReference>
<dbReference type="GO" id="GO:0005829">
    <property type="term" value="C:cytosol"/>
    <property type="evidence" value="ECO:0007669"/>
    <property type="project" value="TreeGrafter"/>
</dbReference>
<dbReference type="GO" id="GO:0033202">
    <property type="term" value="C:DNA helicase complex"/>
    <property type="evidence" value="ECO:0007669"/>
    <property type="project" value="TreeGrafter"/>
</dbReference>
<dbReference type="GO" id="GO:0043138">
    <property type="term" value="F:3'-5' DNA helicase activity"/>
    <property type="evidence" value="ECO:0007669"/>
    <property type="project" value="UniProtKB-UniRule"/>
</dbReference>
<dbReference type="GO" id="GO:0008408">
    <property type="term" value="F:3'-5' exonuclease activity"/>
    <property type="evidence" value="ECO:0007669"/>
    <property type="project" value="UniProtKB-UniRule"/>
</dbReference>
<dbReference type="GO" id="GO:0005524">
    <property type="term" value="F:ATP binding"/>
    <property type="evidence" value="ECO:0007669"/>
    <property type="project" value="UniProtKB-UniRule"/>
</dbReference>
<dbReference type="GO" id="GO:0016887">
    <property type="term" value="F:ATP hydrolysis activity"/>
    <property type="evidence" value="ECO:0007669"/>
    <property type="project" value="RHEA"/>
</dbReference>
<dbReference type="GO" id="GO:0003690">
    <property type="term" value="F:double-stranded DNA binding"/>
    <property type="evidence" value="ECO:0007669"/>
    <property type="project" value="UniProtKB-UniRule"/>
</dbReference>
<dbReference type="GO" id="GO:0000724">
    <property type="term" value="P:double-strand break repair via homologous recombination"/>
    <property type="evidence" value="ECO:0007669"/>
    <property type="project" value="UniProtKB-UniRule"/>
</dbReference>
<dbReference type="CDD" id="cd17932">
    <property type="entry name" value="DEXQc_UvrD"/>
    <property type="match status" value="1"/>
</dbReference>
<dbReference type="FunFam" id="3.40.50.300:FF:001236">
    <property type="entry name" value="ATP-dependent helicase/nuclease subunit A"/>
    <property type="match status" value="1"/>
</dbReference>
<dbReference type="Gene3D" id="3.90.320.10">
    <property type="match status" value="1"/>
</dbReference>
<dbReference type="Gene3D" id="3.40.50.300">
    <property type="entry name" value="P-loop containing nucleotide triphosphate hydrolases"/>
    <property type="match status" value="4"/>
</dbReference>
<dbReference type="HAMAP" id="MF_01451">
    <property type="entry name" value="AddA"/>
    <property type="match status" value="1"/>
</dbReference>
<dbReference type="InterPro" id="IPR014152">
    <property type="entry name" value="AddA"/>
</dbReference>
<dbReference type="InterPro" id="IPR014017">
    <property type="entry name" value="DNA_helicase_UvrD-like_C"/>
</dbReference>
<dbReference type="InterPro" id="IPR000212">
    <property type="entry name" value="DNA_helicase_UvrD/REP"/>
</dbReference>
<dbReference type="InterPro" id="IPR027417">
    <property type="entry name" value="P-loop_NTPase"/>
</dbReference>
<dbReference type="InterPro" id="IPR011604">
    <property type="entry name" value="PDDEXK-like_dom_sf"/>
</dbReference>
<dbReference type="InterPro" id="IPR038726">
    <property type="entry name" value="PDDEXK_AddAB-type"/>
</dbReference>
<dbReference type="InterPro" id="IPR011335">
    <property type="entry name" value="Restrct_endonuc-II-like"/>
</dbReference>
<dbReference type="InterPro" id="IPR014016">
    <property type="entry name" value="UvrD-like_ATP-bd"/>
</dbReference>
<dbReference type="NCBIfam" id="TIGR02785">
    <property type="entry name" value="addA_Gpos"/>
    <property type="match status" value="1"/>
</dbReference>
<dbReference type="PANTHER" id="PTHR11070:SF48">
    <property type="entry name" value="ATP-DEPENDENT HELICASE_NUCLEASE SUBUNIT A"/>
    <property type="match status" value="1"/>
</dbReference>
<dbReference type="PANTHER" id="PTHR11070">
    <property type="entry name" value="UVRD / RECB / PCRA DNA HELICASE FAMILY MEMBER"/>
    <property type="match status" value="1"/>
</dbReference>
<dbReference type="Pfam" id="PF12705">
    <property type="entry name" value="PDDEXK_1"/>
    <property type="match status" value="1"/>
</dbReference>
<dbReference type="Pfam" id="PF00580">
    <property type="entry name" value="UvrD-helicase"/>
    <property type="match status" value="1"/>
</dbReference>
<dbReference type="Pfam" id="PF13361">
    <property type="entry name" value="UvrD_C"/>
    <property type="match status" value="1"/>
</dbReference>
<dbReference type="SUPFAM" id="SSF52540">
    <property type="entry name" value="P-loop containing nucleoside triphosphate hydrolases"/>
    <property type="match status" value="1"/>
</dbReference>
<dbReference type="SUPFAM" id="SSF52980">
    <property type="entry name" value="Restriction endonuclease-like"/>
    <property type="match status" value="1"/>
</dbReference>
<dbReference type="PROSITE" id="PS51198">
    <property type="entry name" value="UVRD_HELICASE_ATP_BIND"/>
    <property type="match status" value="1"/>
</dbReference>
<dbReference type="PROSITE" id="PS51217">
    <property type="entry name" value="UVRD_HELICASE_CTER"/>
    <property type="match status" value="1"/>
</dbReference>
<evidence type="ECO:0000255" key="1">
    <source>
        <dbReference type="HAMAP-Rule" id="MF_01451"/>
    </source>
</evidence>
<evidence type="ECO:0000256" key="2">
    <source>
        <dbReference type="SAM" id="MobiDB-lite"/>
    </source>
</evidence>
<comment type="function">
    <text evidence="1">The heterodimer acts as both an ATP-dependent DNA helicase and an ATP-dependent, dual-direction single-stranded exonuclease. Recognizes the chi site generating a DNA molecule suitable for the initiation of homologous recombination. The AddA nuclease domain is required for chi fragment generation; this subunit has the helicase and 3' -&gt; 5' nuclease activities.</text>
</comment>
<comment type="catalytic activity">
    <reaction evidence="1">
        <text>Couples ATP hydrolysis with the unwinding of duplex DNA by translocating in the 3'-5' direction.</text>
        <dbReference type="EC" id="5.6.2.4"/>
    </reaction>
</comment>
<comment type="catalytic activity">
    <reaction evidence="1">
        <text>ATP + H2O = ADP + phosphate + H(+)</text>
        <dbReference type="Rhea" id="RHEA:13065"/>
        <dbReference type="ChEBI" id="CHEBI:15377"/>
        <dbReference type="ChEBI" id="CHEBI:15378"/>
        <dbReference type="ChEBI" id="CHEBI:30616"/>
        <dbReference type="ChEBI" id="CHEBI:43474"/>
        <dbReference type="ChEBI" id="CHEBI:456216"/>
        <dbReference type="EC" id="5.6.2.4"/>
    </reaction>
</comment>
<comment type="cofactor">
    <cofactor evidence="1">
        <name>Mg(2+)</name>
        <dbReference type="ChEBI" id="CHEBI:18420"/>
    </cofactor>
</comment>
<comment type="subunit">
    <text evidence="1">Heterodimer of AddA and AddB/RexB.</text>
</comment>
<comment type="similarity">
    <text evidence="1">Belongs to the helicase family. AddA subfamily.</text>
</comment>
<sequence length="1233" mass="143718">MGTKWTEEQKQAITTRGSNLLVAAAAGSGKTAVLVERIINLITDEENPVDIDRLLVVTFTNAAASEMRERIAEALIAILDQNPEDKRLANQLTLLNKATITTIHSFCLEVVRNNFFLLDLDPNFRIGDDTETLLLQLEASEELFEEMYAKEDKDKEGFLTLVESYGGTKDDQDLQDILLRLYGFVRSLPWPEKWLKDVINTFRVEDNFKFETSKWAEVILDSLKVEISGILNTMLVAVDKLKNEAGLEGYFHAFQREAYEIEQLLQYDNWNEFKNHIQAIEFERLPNAGKDANKNVKEEVSNIRKKVKDKIKEIKEKFFSDSVEEIKDEIKALYPIMEALADLILLFDKKYKEKKREKGIIDFNDIEHFALQILTEIDEEGAVNPSEVALHYREKFEEIFVDEYQDSNLIQEEILSIIARENPPNRFMVGDVKQSIYRFRQANPYIFFEKYNSYSLDTGEKNQKILLYKNFRSRIEVIEAINYIFKKIMSKNIGEVNYTEEEKLNYGAEYEIPPEDSVTGGAVELHLIEKQKVEEEVEEKEEEKNEEKDFEEEEEDLIDDIQVEARVVAERIKQLFSQNFMVYDKNIKSYRVVDYRDIVVLLRATDRWAPVFLEELTQAGIPAFADTGTGYFDTTEIKTIISLLQVIDNPMQDIPLLAVLRSPIFSFTEEELIDLRLEDMEKTIYEAIKKASQREDELGEKAKNFLDTLKKWQEKAVYMPVDEFLWYLYKDTGYYSYVAAMPQGVQRQANLRILFERAKQYEETSFKGLFNFINFINRLKVSSGDMGSAKIVGENENVVRIMSIHKSKGLEFPVVIVAGLGKQFNTKDLYQKILYHHFLGLGPEFVDFRRRISYPSIVKEAIKYKIKLEGLSEEMRVLYVALTRAKEKLILVGSARDIKKNVRKWANAAILQEKVSEYDILNGKSYMDWIGAAVIRHKDLEPLREFAGVSLSEEEDASKWEVKLWNKKDVLLEKEKNDKVDVVERLRSLDLDAHYSEFYKEVERRLNYVYPYEKACYLPAKLSVTEVKRILNAEVVDEDTTSIFEREVLKTPIFLEKKKGLTAAEKGIAMHLVMQKLDLDKDLSLEGIKEQIKDMVDREILTEEQAKEVNIHKIEGFFKTSLGERMLSSKNVKREVPFHIKLSSREIYKDLPEEYENEFIQVQGIIDCFFEEEDGLVLIDYKTDYVQEGKVEEIKERYKVQIELYSKALENITGKKVKEKYIYLFFNGNILEY</sequence>
<proteinExistence type="inferred from homology"/>
<gene>
    <name evidence="1" type="primary">addA</name>
    <name type="ordered locus">Teth39_2010</name>
</gene>
<feature type="chain" id="PRO_0000379360" description="ATP-dependent helicase/nuclease subunit A">
    <location>
        <begin position="1"/>
        <end position="1233"/>
    </location>
</feature>
<feature type="domain" description="UvrD-like helicase ATP-binding" evidence="1">
    <location>
        <begin position="3"/>
        <end position="474"/>
    </location>
</feature>
<feature type="domain" description="UvrD-like helicase C-terminal" evidence="1">
    <location>
        <begin position="518"/>
        <end position="809"/>
    </location>
</feature>
<feature type="region of interest" description="Disordered" evidence="2">
    <location>
        <begin position="533"/>
        <end position="555"/>
    </location>
</feature>
<feature type="binding site" evidence="1">
    <location>
        <begin position="24"/>
        <end position="31"/>
    </location>
    <ligand>
        <name>ATP</name>
        <dbReference type="ChEBI" id="CHEBI:30616"/>
    </ligand>
</feature>
<keyword id="KW-0067">ATP-binding</keyword>
<keyword id="KW-0227">DNA damage</keyword>
<keyword id="KW-0234">DNA repair</keyword>
<keyword id="KW-0238">DNA-binding</keyword>
<keyword id="KW-0269">Exonuclease</keyword>
<keyword id="KW-0347">Helicase</keyword>
<keyword id="KW-0378">Hydrolase</keyword>
<keyword id="KW-0413">Isomerase</keyword>
<keyword id="KW-0540">Nuclease</keyword>
<keyword id="KW-0547">Nucleotide-binding</keyword>
<keyword id="KW-1185">Reference proteome</keyword>
<accession>B0KDB7</accession>
<protein>
    <recommendedName>
        <fullName evidence="1">ATP-dependent helicase/nuclease subunit A</fullName>
        <ecNumber evidence="1">3.1.-.-</ecNumber>
        <ecNumber evidence="1">5.6.2.4</ecNumber>
    </recommendedName>
    <alternativeName>
        <fullName evidence="1">ATP-dependent helicase/nuclease AddA</fullName>
    </alternativeName>
    <alternativeName>
        <fullName evidence="1">DNA 3'-5' helicase AddA</fullName>
    </alternativeName>
</protein>
<name>ADDA_THEP3</name>